<sequence length="144" mass="15875">MKQVSRSALVSFSAEQMFHLVNDVARYPEFLPGCSGSCVLEQSEAHMVASVDVSKAGISKTFTTSNQLTPGVSIAMSLVDGPFKTLRGGWFFTPLDEAACKVELRLEFEFSSKMIELAFGKIFNELTSNMVNAFTRRAKQVYGE</sequence>
<evidence type="ECO:0000250" key="1"/>
<evidence type="ECO:0000305" key="2"/>
<gene>
    <name type="primary">ratA</name>
    <name type="ordered locus">VC_0849</name>
</gene>
<organism>
    <name type="scientific">Vibrio cholerae serotype O1 (strain ATCC 39315 / El Tor Inaba N16961)</name>
    <dbReference type="NCBI Taxonomy" id="243277"/>
    <lineage>
        <taxon>Bacteria</taxon>
        <taxon>Pseudomonadati</taxon>
        <taxon>Pseudomonadota</taxon>
        <taxon>Gammaproteobacteria</taxon>
        <taxon>Vibrionales</taxon>
        <taxon>Vibrionaceae</taxon>
        <taxon>Vibrio</taxon>
    </lineage>
</organism>
<accession>P0C6Q0</accession>
<accession>P52122</accession>
<accession>Q9KTQ2</accession>
<feature type="chain" id="PRO_0000192478" description="Ribosome association toxin RatA">
    <location>
        <begin position="1"/>
        <end position="144"/>
    </location>
</feature>
<keyword id="KW-1185">Reference proteome</keyword>
<keyword id="KW-1277">Toxin-antitoxin system</keyword>
<comment type="function">
    <text evidence="1">Toxic component of a type II toxin-antitoxin (TA) system. Binds to 50S ribosomal subunits, preventing them from associating with 30S subunits to form 70S ribosomes. Its antitoxin is unknown (By similarity).</text>
</comment>
<comment type="similarity">
    <text evidence="2">Belongs to the ribosome association toxin RatA family.</text>
</comment>
<comment type="sequence caution" evidence="2">
    <conflict type="erroneous initiation">
        <sequence resource="EMBL-CDS" id="AAF94011"/>
    </conflict>
    <text>Extended N-terminus.</text>
</comment>
<dbReference type="EMBL" id="AE003852">
    <property type="protein sequence ID" value="AAF94011.1"/>
    <property type="status" value="ALT_INIT"/>
    <property type="molecule type" value="Genomic_DNA"/>
</dbReference>
<dbReference type="PIR" id="D82272">
    <property type="entry name" value="D82272"/>
</dbReference>
<dbReference type="RefSeq" id="NP_230496.1">
    <property type="nucleotide sequence ID" value="NC_002505.1"/>
</dbReference>
<dbReference type="RefSeq" id="WP_000815876.1">
    <property type="nucleotide sequence ID" value="NZ_LT906614.1"/>
</dbReference>
<dbReference type="SMR" id="P0C6Q0"/>
<dbReference type="STRING" id="243277.VC_0849"/>
<dbReference type="DNASU" id="2614516"/>
<dbReference type="EnsemblBacteria" id="AAF94011">
    <property type="protein sequence ID" value="AAF94011"/>
    <property type="gene ID" value="VC_0849"/>
</dbReference>
<dbReference type="KEGG" id="vch:VC_0849"/>
<dbReference type="PATRIC" id="fig|243277.26.peg.809"/>
<dbReference type="eggNOG" id="COG2867">
    <property type="taxonomic scope" value="Bacteria"/>
</dbReference>
<dbReference type="HOGENOM" id="CLU_079653_3_1_6"/>
<dbReference type="Proteomes" id="UP000000584">
    <property type="component" value="Chromosome 1"/>
</dbReference>
<dbReference type="GO" id="GO:0048039">
    <property type="term" value="F:ubiquinone binding"/>
    <property type="evidence" value="ECO:0007669"/>
    <property type="project" value="InterPro"/>
</dbReference>
<dbReference type="GO" id="GO:0045333">
    <property type="term" value="P:cellular respiration"/>
    <property type="evidence" value="ECO:0007669"/>
    <property type="project" value="InterPro"/>
</dbReference>
<dbReference type="CDD" id="cd07813">
    <property type="entry name" value="COQ10p_like"/>
    <property type="match status" value="1"/>
</dbReference>
<dbReference type="FunFam" id="3.30.530.20:FF:000005">
    <property type="entry name" value="Type II toxin-antitoxin system toxin RatA"/>
    <property type="match status" value="1"/>
</dbReference>
<dbReference type="Gene3D" id="3.30.530.20">
    <property type="match status" value="1"/>
</dbReference>
<dbReference type="InterPro" id="IPR044996">
    <property type="entry name" value="COQ10-like"/>
</dbReference>
<dbReference type="InterPro" id="IPR005031">
    <property type="entry name" value="COQ10_START"/>
</dbReference>
<dbReference type="InterPro" id="IPR023393">
    <property type="entry name" value="START-like_dom_sf"/>
</dbReference>
<dbReference type="PANTHER" id="PTHR12901:SF10">
    <property type="entry name" value="COENZYME Q-BINDING PROTEIN COQ10, MITOCHONDRIAL"/>
    <property type="match status" value="1"/>
</dbReference>
<dbReference type="PANTHER" id="PTHR12901">
    <property type="entry name" value="SPERM PROTEIN HOMOLOG"/>
    <property type="match status" value="1"/>
</dbReference>
<dbReference type="Pfam" id="PF03364">
    <property type="entry name" value="Polyketide_cyc"/>
    <property type="match status" value="1"/>
</dbReference>
<dbReference type="SUPFAM" id="SSF55961">
    <property type="entry name" value="Bet v1-like"/>
    <property type="match status" value="1"/>
</dbReference>
<reference key="1">
    <citation type="journal article" date="2000" name="Nature">
        <title>DNA sequence of both chromosomes of the cholera pathogen Vibrio cholerae.</title>
        <authorList>
            <person name="Heidelberg J.F."/>
            <person name="Eisen J.A."/>
            <person name="Nelson W.C."/>
            <person name="Clayton R.A."/>
            <person name="Gwinn M.L."/>
            <person name="Dodson R.J."/>
            <person name="Haft D.H."/>
            <person name="Hickey E.K."/>
            <person name="Peterson J.D."/>
            <person name="Umayam L.A."/>
            <person name="Gill S.R."/>
            <person name="Nelson K.E."/>
            <person name="Read T.D."/>
            <person name="Tettelin H."/>
            <person name="Richardson D.L."/>
            <person name="Ermolaeva M.D."/>
            <person name="Vamathevan J.J."/>
            <person name="Bass S."/>
            <person name="Qin H."/>
            <person name="Dragoi I."/>
            <person name="Sellers P."/>
            <person name="McDonald L.A."/>
            <person name="Utterback T.R."/>
            <person name="Fleischmann R.D."/>
            <person name="Nierman W.C."/>
            <person name="White O."/>
            <person name="Salzberg S.L."/>
            <person name="Smith H.O."/>
            <person name="Colwell R.R."/>
            <person name="Mekalanos J.J."/>
            <person name="Venter J.C."/>
            <person name="Fraser C.M."/>
        </authorList>
    </citation>
    <scope>NUCLEOTIDE SEQUENCE [LARGE SCALE GENOMIC DNA]</scope>
    <source>
        <strain>ATCC 39315 / El Tor Inaba N16961</strain>
    </source>
</reference>
<proteinExistence type="inferred from homology"/>
<name>RATA_VIBCH</name>
<protein>
    <recommendedName>
        <fullName>Ribosome association toxin RatA</fullName>
    </recommendedName>
</protein>